<proteinExistence type="evidence at protein level"/>
<comment type="function">
    <text evidence="2">Selectively inhibits voltage-gated potassium channels Kv1.2/KCNA2 (IC(50)=183 nM).</text>
</comment>
<comment type="subcellular location">
    <subcellularLocation>
        <location evidence="2">Secreted</location>
    </subcellularLocation>
</comment>
<comment type="tissue specificity">
    <text evidence="5">Expressed by the venom gland.</text>
</comment>
<comment type="domain">
    <text evidence="1">Has the structural arrangement of an alpha-helix connected to a beta-sheet by disulfide bonds (CSalpha/beta).</text>
</comment>
<comment type="mass spectrometry"/>
<comment type="miscellaneous">
    <text evidence="5">Negative results: does not affect Kv1.1/KCNA1, Kv1.3/KCNA3, Kv1.4/KCNA4, Kv1.5/KCNA5 and Shaker IR.</text>
</comment>
<comment type="similarity">
    <text evidence="4">Belongs to the short scorpion toxin superfamily. Potassium channel inhibitor family. Alpha-KTx 08 subfamily.</text>
</comment>
<protein>
    <recommendedName>
        <fullName evidence="4">Potassium channel toxin alpha-KTx 8.5</fullName>
    </recommendedName>
    <alternativeName>
        <fullName evidence="3">OdK1</fullName>
    </alternativeName>
    <alternativeName>
        <fullName evidence="6">Potassium channel toxin KTx7</fullName>
        <shortName evidence="6">ODKTx7</shortName>
    </alternativeName>
</protein>
<feature type="signal peptide" evidence="2">
    <location>
        <begin position="1"/>
        <end position="28"/>
    </location>
</feature>
<feature type="peptide" id="PRO_0000390674" description="Potassium channel toxin alpha-KTx 8.5" evidence="2">
    <location>
        <begin position="29"/>
        <end position="57"/>
    </location>
</feature>
<feature type="disulfide bond" evidence="1">
    <location>
        <begin position="31"/>
        <end position="47"/>
    </location>
</feature>
<feature type="disulfide bond" evidence="1">
    <location>
        <begin position="34"/>
        <end position="52"/>
    </location>
</feature>
<feature type="disulfide bond" evidence="1">
    <location>
        <begin position="38"/>
        <end position="54"/>
    </location>
</feature>
<name>KAX85_ODODO</name>
<accession>P0CC12</accession>
<accession>A0A0U4I1L0</accession>
<evidence type="ECO:0000250" key="1">
    <source>
        <dbReference type="UniProtKB" id="P80671"/>
    </source>
</evidence>
<evidence type="ECO:0000269" key="2">
    <source>
    </source>
</evidence>
<evidence type="ECO:0000303" key="3">
    <source>
    </source>
</evidence>
<evidence type="ECO:0000305" key="4"/>
<evidence type="ECO:0000305" key="5">
    <source>
    </source>
</evidence>
<evidence type="ECO:0000312" key="6">
    <source>
        <dbReference type="EMBL" id="ALX72349.1"/>
    </source>
</evidence>
<organism>
    <name type="scientific">Odontobuthus doriae</name>
    <name type="common">Yellow Iranian scorpion</name>
    <dbReference type="NCBI Taxonomy" id="342590"/>
    <lineage>
        <taxon>Eukaryota</taxon>
        <taxon>Metazoa</taxon>
        <taxon>Ecdysozoa</taxon>
        <taxon>Arthropoda</taxon>
        <taxon>Chelicerata</taxon>
        <taxon>Arachnida</taxon>
        <taxon>Scorpiones</taxon>
        <taxon>Buthida</taxon>
        <taxon>Buthoidea</taxon>
        <taxon>Buthidae</taxon>
        <taxon>Odontobuthus</taxon>
    </lineage>
</organism>
<dbReference type="EMBL" id="KU365851">
    <property type="protein sequence ID" value="ALX72349.1"/>
    <property type="molecule type" value="mRNA"/>
</dbReference>
<dbReference type="SMR" id="P0CC12"/>
<dbReference type="GO" id="GO:0005576">
    <property type="term" value="C:extracellular region"/>
    <property type="evidence" value="ECO:0000314"/>
    <property type="project" value="UniProtKB"/>
</dbReference>
<dbReference type="GO" id="GO:0019870">
    <property type="term" value="F:potassium channel inhibitor activity"/>
    <property type="evidence" value="ECO:0000314"/>
    <property type="project" value="UniProtKB"/>
</dbReference>
<dbReference type="GO" id="GO:0090729">
    <property type="term" value="F:toxin activity"/>
    <property type="evidence" value="ECO:0000314"/>
    <property type="project" value="UniProtKB"/>
</dbReference>
<dbReference type="GO" id="GO:0044562">
    <property type="term" value="P:envenomation resulting in negative regulation of voltage-gated potassium channel activity in another organism"/>
    <property type="evidence" value="ECO:0000314"/>
    <property type="project" value="UniProtKB"/>
</dbReference>
<dbReference type="InterPro" id="IPR036574">
    <property type="entry name" value="Scorpion_toxin-like_sf"/>
</dbReference>
<dbReference type="InterPro" id="IPR008911">
    <property type="entry name" value="Toxin_alpha-KTx_8/9"/>
</dbReference>
<dbReference type="Pfam" id="PF05453">
    <property type="entry name" value="Toxin_6"/>
    <property type="match status" value="1"/>
</dbReference>
<dbReference type="SUPFAM" id="SSF57095">
    <property type="entry name" value="Scorpion toxin-like"/>
    <property type="match status" value="1"/>
</dbReference>
<keyword id="KW-0903">Direct protein sequencing</keyword>
<keyword id="KW-1015">Disulfide bond</keyword>
<keyword id="KW-0872">Ion channel impairing toxin</keyword>
<keyword id="KW-0632">Potassium channel impairing toxin</keyword>
<keyword id="KW-0964">Secreted</keyword>
<keyword id="KW-0732">Signal</keyword>
<keyword id="KW-0800">Toxin</keyword>
<keyword id="KW-1220">Voltage-gated potassium channel impairing toxin</keyword>
<reference key="1">
    <citation type="submission" date="2015-12" db="EMBL/GenBank/DDBJ databases">
        <title>First venom gland transcriptomic analysis of Iranian yellow scorpion 'Odonthubuthus doriae'.</title>
        <authorList>
            <person name="Soorki M.N."/>
            <person name="Galehdari H."/>
            <person name="Jalali A."/>
            <person name="Baradaran M."/>
        </authorList>
    </citation>
    <scope>NUCLEOTIDE SEQUENCE [MRNA]</scope>
    <source>
        <tissue>Venom gland</tissue>
    </source>
</reference>
<reference key="2">
    <citation type="journal article" date="2006" name="FEBS Lett.">
        <title>The first potassium channel toxin from the venom of the Iranian scorpion Odonthobuthus doriae.</title>
        <authorList>
            <person name="Abdel-Mottaleb Y."/>
            <person name="Clynen E."/>
            <person name="Jalali A."/>
            <person name="Bosmans F."/>
            <person name="Vatanpour H."/>
            <person name="Schoofs L."/>
            <person name="Tytgat J."/>
        </authorList>
    </citation>
    <scope>PROTEIN SEQUENCE OF 29-57</scope>
    <scope>FUNCTION</scope>
    <scope>SUBCELLULAR LOCATION</scope>
    <scope>MASS SPECTROMETRY</scope>
    <source>
        <tissue>Venom</tissue>
    </source>
</reference>
<sequence>MSRLYAIILIALVLNVIMTIMPDSKVEAVSCEDCPEHCSTQKARAKCDNDKCVCESV</sequence>